<name>PANB_PYRAR</name>
<sequence length="264" mass="28399">MPDKKRRVTDFVKGGGPYVWVTAYDYPTAKLVDEAGVDGILVGDSLGMVVLGLPNTLGVTLADMVRHTQAVARAAPKALVVADMPFMTYETGPRDALRNAARLIRAGAEAVKLEGGSEYAHVVEKLVKAGIPVMGHIGLNPQRVLALGGFKMVGKTEEQKKKLVEDAKALRDVGVFAIVVEFVPASVAKEVTQSVDVPTICIGAGPHCDGQILVLHDVVGLSERTPSFAKRYANVAEQILSAVRQYVQEVRTKAFPAKEHYRDV</sequence>
<gene>
    <name evidence="1" type="primary">panB</name>
    <name type="ordered locus">Pars_2004</name>
</gene>
<feature type="chain" id="PRO_0000297424" description="3-methyl-2-oxobutanoate hydroxymethyltransferase">
    <location>
        <begin position="1"/>
        <end position="264"/>
    </location>
</feature>
<feature type="active site" description="Proton acceptor" evidence="1">
    <location>
        <position position="181"/>
    </location>
</feature>
<feature type="binding site" evidence="1">
    <location>
        <begin position="44"/>
        <end position="45"/>
    </location>
    <ligand>
        <name>3-methyl-2-oxobutanoate</name>
        <dbReference type="ChEBI" id="CHEBI:11851"/>
    </ligand>
</feature>
<feature type="binding site" evidence="1">
    <location>
        <position position="44"/>
    </location>
    <ligand>
        <name>Mg(2+)</name>
        <dbReference type="ChEBI" id="CHEBI:18420"/>
    </ligand>
</feature>
<feature type="binding site" evidence="1">
    <location>
        <position position="83"/>
    </location>
    <ligand>
        <name>3-methyl-2-oxobutanoate</name>
        <dbReference type="ChEBI" id="CHEBI:11851"/>
    </ligand>
</feature>
<feature type="binding site" evidence="1">
    <location>
        <position position="83"/>
    </location>
    <ligand>
        <name>Mg(2+)</name>
        <dbReference type="ChEBI" id="CHEBI:18420"/>
    </ligand>
</feature>
<feature type="binding site" evidence="1">
    <location>
        <position position="112"/>
    </location>
    <ligand>
        <name>3-methyl-2-oxobutanoate</name>
        <dbReference type="ChEBI" id="CHEBI:11851"/>
    </ligand>
</feature>
<feature type="binding site" evidence="1">
    <location>
        <position position="114"/>
    </location>
    <ligand>
        <name>Mg(2+)</name>
        <dbReference type="ChEBI" id="CHEBI:18420"/>
    </ligand>
</feature>
<protein>
    <recommendedName>
        <fullName evidence="1">3-methyl-2-oxobutanoate hydroxymethyltransferase</fullName>
        <ecNumber evidence="1">2.1.2.11</ecNumber>
    </recommendedName>
    <alternativeName>
        <fullName evidence="1">Ketopantoate hydroxymethyltransferase</fullName>
        <shortName evidence="1">KPHMT</shortName>
    </alternativeName>
</protein>
<dbReference type="EC" id="2.1.2.11" evidence="1"/>
<dbReference type="EMBL" id="CP000660">
    <property type="protein sequence ID" value="ABP51551.1"/>
    <property type="molecule type" value="Genomic_DNA"/>
</dbReference>
<dbReference type="SMR" id="A4WMD4"/>
<dbReference type="STRING" id="340102.Pars_2004"/>
<dbReference type="KEGG" id="pas:Pars_2004"/>
<dbReference type="HOGENOM" id="CLU_036645_1_0_2"/>
<dbReference type="OrthoDB" id="8414at2157"/>
<dbReference type="PhylomeDB" id="A4WMD4"/>
<dbReference type="UniPathway" id="UPA00241"/>
<dbReference type="Proteomes" id="UP000001567">
    <property type="component" value="Chromosome"/>
</dbReference>
<dbReference type="GO" id="GO:0005737">
    <property type="term" value="C:cytoplasm"/>
    <property type="evidence" value="ECO:0007669"/>
    <property type="project" value="UniProtKB-SubCell"/>
</dbReference>
<dbReference type="GO" id="GO:0003864">
    <property type="term" value="F:3-methyl-2-oxobutanoate hydroxymethyltransferase activity"/>
    <property type="evidence" value="ECO:0007669"/>
    <property type="project" value="UniProtKB-UniRule"/>
</dbReference>
<dbReference type="GO" id="GO:0000287">
    <property type="term" value="F:magnesium ion binding"/>
    <property type="evidence" value="ECO:0007669"/>
    <property type="project" value="TreeGrafter"/>
</dbReference>
<dbReference type="GO" id="GO:0015937">
    <property type="term" value="P:coenzyme A biosynthetic process"/>
    <property type="evidence" value="ECO:0007669"/>
    <property type="project" value="UniProtKB-UniRule"/>
</dbReference>
<dbReference type="GO" id="GO:0015940">
    <property type="term" value="P:pantothenate biosynthetic process"/>
    <property type="evidence" value="ECO:0007669"/>
    <property type="project" value="InterPro"/>
</dbReference>
<dbReference type="CDD" id="cd06557">
    <property type="entry name" value="KPHMT-like"/>
    <property type="match status" value="1"/>
</dbReference>
<dbReference type="FunFam" id="3.20.20.60:FF:000003">
    <property type="entry name" value="3-methyl-2-oxobutanoate hydroxymethyltransferase"/>
    <property type="match status" value="1"/>
</dbReference>
<dbReference type="Gene3D" id="3.20.20.60">
    <property type="entry name" value="Phosphoenolpyruvate-binding domains"/>
    <property type="match status" value="1"/>
</dbReference>
<dbReference type="HAMAP" id="MF_00156">
    <property type="entry name" value="PanB"/>
    <property type="match status" value="1"/>
</dbReference>
<dbReference type="InterPro" id="IPR003700">
    <property type="entry name" value="Pantoate_hydroxy_MeTrfase"/>
</dbReference>
<dbReference type="InterPro" id="IPR015813">
    <property type="entry name" value="Pyrv/PenolPyrv_kinase-like_dom"/>
</dbReference>
<dbReference type="InterPro" id="IPR040442">
    <property type="entry name" value="Pyrv_kinase-like_dom_sf"/>
</dbReference>
<dbReference type="NCBIfam" id="TIGR00222">
    <property type="entry name" value="panB"/>
    <property type="match status" value="1"/>
</dbReference>
<dbReference type="NCBIfam" id="NF001452">
    <property type="entry name" value="PRK00311.1"/>
    <property type="match status" value="1"/>
</dbReference>
<dbReference type="PANTHER" id="PTHR20881">
    <property type="entry name" value="3-METHYL-2-OXOBUTANOATE HYDROXYMETHYLTRANSFERASE"/>
    <property type="match status" value="1"/>
</dbReference>
<dbReference type="PANTHER" id="PTHR20881:SF0">
    <property type="entry name" value="3-METHYL-2-OXOBUTANOATE HYDROXYMETHYLTRANSFERASE"/>
    <property type="match status" value="1"/>
</dbReference>
<dbReference type="Pfam" id="PF02548">
    <property type="entry name" value="Pantoate_transf"/>
    <property type="match status" value="1"/>
</dbReference>
<dbReference type="PIRSF" id="PIRSF000388">
    <property type="entry name" value="Pantoate_hydroxy_MeTrfase"/>
    <property type="match status" value="1"/>
</dbReference>
<dbReference type="SUPFAM" id="SSF51621">
    <property type="entry name" value="Phosphoenolpyruvate/pyruvate domain"/>
    <property type="match status" value="1"/>
</dbReference>
<comment type="function">
    <text evidence="1">Catalyzes the reversible reaction in which hydroxymethyl group from 5,10-methylenetetrahydrofolate is transferred onto alpha-ketoisovalerate to form ketopantoate.</text>
</comment>
<comment type="catalytic activity">
    <reaction evidence="1">
        <text>3-methyl-2-oxobutanoate + (6R)-5,10-methylene-5,6,7,8-tetrahydrofolate + H2O = 2-dehydropantoate + (6S)-5,6,7,8-tetrahydrofolate</text>
        <dbReference type="Rhea" id="RHEA:11824"/>
        <dbReference type="ChEBI" id="CHEBI:11561"/>
        <dbReference type="ChEBI" id="CHEBI:11851"/>
        <dbReference type="ChEBI" id="CHEBI:15377"/>
        <dbReference type="ChEBI" id="CHEBI:15636"/>
        <dbReference type="ChEBI" id="CHEBI:57453"/>
        <dbReference type="EC" id="2.1.2.11"/>
    </reaction>
</comment>
<comment type="cofactor">
    <cofactor evidence="1">
        <name>Mg(2+)</name>
        <dbReference type="ChEBI" id="CHEBI:18420"/>
    </cofactor>
    <text evidence="1">Binds 1 Mg(2+) ion per subunit.</text>
</comment>
<comment type="pathway">
    <text evidence="1">Cofactor biosynthesis; coenzyme A biosynthesis.</text>
</comment>
<comment type="subunit">
    <text evidence="1">Homodecamer; pentamer of dimers.</text>
</comment>
<comment type="subcellular location">
    <subcellularLocation>
        <location evidence="1">Cytoplasm</location>
    </subcellularLocation>
</comment>
<comment type="similarity">
    <text evidence="1">Belongs to the PanB family.</text>
</comment>
<evidence type="ECO:0000255" key="1">
    <source>
        <dbReference type="HAMAP-Rule" id="MF_00156"/>
    </source>
</evidence>
<accession>A4WMD4</accession>
<proteinExistence type="inferred from homology"/>
<organism>
    <name type="scientific">Pyrobaculum arsenaticum (strain DSM 13514 / JCM 11321 / PZ6)</name>
    <dbReference type="NCBI Taxonomy" id="340102"/>
    <lineage>
        <taxon>Archaea</taxon>
        <taxon>Thermoproteota</taxon>
        <taxon>Thermoprotei</taxon>
        <taxon>Thermoproteales</taxon>
        <taxon>Thermoproteaceae</taxon>
        <taxon>Pyrobaculum</taxon>
    </lineage>
</organism>
<reference key="1">
    <citation type="submission" date="2007-04" db="EMBL/GenBank/DDBJ databases">
        <title>Complete sequence of Pyrobaculum arsenaticum DSM 13514.</title>
        <authorList>
            <consortium name="US DOE Joint Genome Institute"/>
            <person name="Copeland A."/>
            <person name="Lucas S."/>
            <person name="Lapidus A."/>
            <person name="Barry K."/>
            <person name="Glavina del Rio T."/>
            <person name="Dalin E."/>
            <person name="Tice H."/>
            <person name="Pitluck S."/>
            <person name="Chain P."/>
            <person name="Malfatti S."/>
            <person name="Shin M."/>
            <person name="Vergez L."/>
            <person name="Schmutz J."/>
            <person name="Larimer F."/>
            <person name="Land M."/>
            <person name="Hauser L."/>
            <person name="Kyrpides N."/>
            <person name="Mikhailova N."/>
            <person name="Cozen A.E."/>
            <person name="Fitz-Gibbon S.T."/>
            <person name="House C.H."/>
            <person name="Saltikov C."/>
            <person name="Lowe T.M."/>
            <person name="Richardson P."/>
        </authorList>
    </citation>
    <scope>NUCLEOTIDE SEQUENCE [LARGE SCALE GENOMIC DNA]</scope>
    <source>
        <strain>ATCC 700994 / DSM 13514 / JCM 11321 / PZ6</strain>
    </source>
</reference>
<keyword id="KW-0173">Coenzyme A biosynthesis</keyword>
<keyword id="KW-0963">Cytoplasm</keyword>
<keyword id="KW-0460">Magnesium</keyword>
<keyword id="KW-0479">Metal-binding</keyword>
<keyword id="KW-0808">Transferase</keyword>